<comment type="function">
    <text>May act as a carbohydrate-binding protein.</text>
</comment>
<comment type="similarity">
    <text evidence="3">Belongs to the glycosyl hydrolase 18 family.</text>
</comment>
<protein>
    <recommendedName>
        <fullName>Concanavalin B</fullName>
        <shortName>Con B</shortName>
    </recommendedName>
</protein>
<evidence type="ECO:0000255" key="1"/>
<evidence type="ECO:0000255" key="2">
    <source>
        <dbReference type="PROSITE-ProRule" id="PRU01258"/>
    </source>
</evidence>
<evidence type="ECO:0000305" key="3"/>
<evidence type="ECO:0007829" key="4">
    <source>
        <dbReference type="PDB" id="1CNV"/>
    </source>
</evidence>
<evidence type="ECO:0007829" key="5">
    <source>
        <dbReference type="PDB" id="6CAF"/>
    </source>
</evidence>
<evidence type="ECO:0007829" key="6">
    <source>
        <dbReference type="PDB" id="6GWA"/>
    </source>
</evidence>
<feature type="signal peptide">
    <location>
        <begin position="1"/>
        <end position="25"/>
    </location>
</feature>
<feature type="chain" id="PRO_0000011989" description="Concanavalin B">
    <location>
        <begin position="26"/>
        <end position="324"/>
    </location>
</feature>
<feature type="domain" description="GH18" evidence="2">
    <location>
        <begin position="30"/>
        <end position="311"/>
    </location>
</feature>
<feature type="glycosylation site" description="N-linked (GlcNAc...) asparagine" evidence="1">
    <location>
        <position position="309"/>
    </location>
</feature>
<feature type="helix" evidence="5">
    <location>
        <begin position="27"/>
        <end position="29"/>
    </location>
</feature>
<feature type="strand" evidence="5">
    <location>
        <begin position="31"/>
        <end position="36"/>
    </location>
</feature>
<feature type="helix" evidence="5">
    <location>
        <begin position="39"/>
        <end position="41"/>
    </location>
</feature>
<feature type="helix" evidence="5">
    <location>
        <begin position="44"/>
        <end position="49"/>
    </location>
</feature>
<feature type="strand" evidence="5">
    <location>
        <begin position="54"/>
        <end position="61"/>
    </location>
</feature>
<feature type="turn" evidence="5">
    <location>
        <begin position="76"/>
        <end position="78"/>
    </location>
</feature>
<feature type="turn" evidence="5">
    <location>
        <begin position="81"/>
        <end position="83"/>
    </location>
</feature>
<feature type="helix" evidence="5">
    <location>
        <begin position="87"/>
        <end position="90"/>
    </location>
</feature>
<feature type="helix" evidence="5">
    <location>
        <begin position="91"/>
        <end position="99"/>
    </location>
</feature>
<feature type="strand" evidence="5">
    <location>
        <begin position="103"/>
        <end position="109"/>
    </location>
</feature>
<feature type="strand" evidence="5">
    <location>
        <begin position="111"/>
        <end position="115"/>
    </location>
</feature>
<feature type="helix" evidence="5">
    <location>
        <begin position="120"/>
        <end position="134"/>
    </location>
</feature>
<feature type="strand" evidence="5">
    <location>
        <begin position="135"/>
        <end position="139"/>
    </location>
</feature>
<feature type="strand" evidence="5">
    <location>
        <begin position="149"/>
        <end position="154"/>
    </location>
</feature>
<feature type="strand" evidence="6">
    <location>
        <begin position="161"/>
        <end position="163"/>
    </location>
</feature>
<feature type="helix" evidence="5">
    <location>
        <begin position="164"/>
        <end position="178"/>
    </location>
</feature>
<feature type="strand" evidence="5">
    <location>
        <begin position="183"/>
        <end position="186"/>
    </location>
</feature>
<feature type="strand" evidence="5">
    <location>
        <begin position="189"/>
        <end position="193"/>
    </location>
</feature>
<feature type="turn" evidence="5">
    <location>
        <begin position="195"/>
        <end position="197"/>
    </location>
</feature>
<feature type="helix" evidence="5">
    <location>
        <begin position="198"/>
        <end position="202"/>
    </location>
</feature>
<feature type="strand" evidence="5">
    <location>
        <begin position="207"/>
        <end position="212"/>
    </location>
</feature>
<feature type="turn" evidence="5">
    <location>
        <begin position="217"/>
        <end position="219"/>
    </location>
</feature>
<feature type="helix" evidence="5">
    <location>
        <begin position="227"/>
        <end position="239"/>
    </location>
</feature>
<feature type="strand" evidence="4">
    <location>
        <begin position="240"/>
        <end position="242"/>
    </location>
</feature>
<feature type="strand" evidence="5">
    <location>
        <begin position="247"/>
        <end position="254"/>
    </location>
</feature>
<feature type="helix" evidence="5">
    <location>
        <begin position="255"/>
        <end position="257"/>
    </location>
</feature>
<feature type="helix" evidence="5">
    <location>
        <begin position="266"/>
        <end position="272"/>
    </location>
</feature>
<feature type="helix" evidence="5">
    <location>
        <begin position="274"/>
        <end position="276"/>
    </location>
</feature>
<feature type="helix" evidence="5">
    <location>
        <begin position="280"/>
        <end position="283"/>
    </location>
</feature>
<feature type="strand" evidence="5">
    <location>
        <begin position="284"/>
        <end position="290"/>
    </location>
</feature>
<feature type="helix" evidence="5">
    <location>
        <begin position="292"/>
        <end position="298"/>
    </location>
</feature>
<feature type="helix" evidence="5">
    <location>
        <begin position="300"/>
        <end position="308"/>
    </location>
</feature>
<feature type="turn" evidence="5">
    <location>
        <begin position="309"/>
        <end position="312"/>
    </location>
</feature>
<organism>
    <name type="scientific">Canavalia ensiformis</name>
    <name type="common">Jack bean</name>
    <name type="synonym">Dolichos ensiformis</name>
    <dbReference type="NCBI Taxonomy" id="3823"/>
    <lineage>
        <taxon>Eukaryota</taxon>
        <taxon>Viridiplantae</taxon>
        <taxon>Streptophyta</taxon>
        <taxon>Embryophyta</taxon>
        <taxon>Tracheophyta</taxon>
        <taxon>Spermatophyta</taxon>
        <taxon>Magnoliopsida</taxon>
        <taxon>eudicotyledons</taxon>
        <taxon>Gunneridae</taxon>
        <taxon>Pentapetalae</taxon>
        <taxon>rosids</taxon>
        <taxon>fabids</taxon>
        <taxon>Fabales</taxon>
        <taxon>Fabaceae</taxon>
        <taxon>Papilionoideae</taxon>
        <taxon>50 kb inversion clade</taxon>
        <taxon>NPAAA clade</taxon>
        <taxon>indigoferoid/millettioid clade</taxon>
        <taxon>Phaseoleae</taxon>
        <taxon>Canavalia</taxon>
    </lineage>
</organism>
<reference key="1">
    <citation type="submission" date="1994-12" db="EMBL/GenBank/DDBJ databases">
        <authorList>
            <person name="Schlesier B."/>
            <person name="Nong V."/>
            <person name="Horstmann C."/>
            <person name="Hennig M."/>
        </authorList>
    </citation>
    <scope>NUCLEOTIDE SEQUENCE [MRNA]</scope>
    <scope>PARTIAL PROTEIN SEQUENCE</scope>
    <source>
        <tissue>Cotyledon</tissue>
    </source>
</reference>
<reference key="2">
    <citation type="journal article" date="1995" name="J. Mol. Biol.">
        <title>Crystal structure of concanavalin B at 1.65-A resolution. An 'inactivated' chitinase from seeds of Canavalia ensiformis.</title>
        <authorList>
            <person name="Hennig M."/>
            <person name="Jansonius J.N."/>
            <person name="van Scheltinga A.C.T."/>
            <person name="Dijkstra B.W."/>
            <person name="Schlesier B."/>
        </authorList>
    </citation>
    <scope>X-RAY CRYSTALLOGRAPHY (1.65 ANGSTROMS)</scope>
</reference>
<sequence length="324" mass="36728">MGCERKALILMVVIWIMSFWTLSLADISSTEIAVYWGQREDGLLRDTCKTNNYKIVFISFLDKFGCEIRKPELELEGVCGPSVGNPCSFLESQIKECQRMGVKVFLALGGPKGTYSACSADYAKDLAEYLHTYFLSERREGPLGKVALDGIHFDIQKPVDELNWDNLLEELYQIKDVYQSTFLLSAAPGCLSPDEYLDNAIQTRHFDYIFVRFYNDRSCQYSTGNIQRIRNAWLSWTKSVYPRDKNLFLELPASQATAPGGGYIPPSALIGQVLPYLPDLQTRYAGIALWNRQADKETGYSTNIIRYLNATAMPFTSNLLKYPS</sequence>
<accession>P49347</accession>
<dbReference type="EMBL" id="X83426">
    <property type="protein sequence ID" value="CAA58450.1"/>
    <property type="molecule type" value="mRNA"/>
</dbReference>
<dbReference type="PIR" id="S57649">
    <property type="entry name" value="S57649"/>
</dbReference>
<dbReference type="PDB" id="1CNV">
    <property type="method" value="X-ray"/>
    <property type="resolution" value="1.65 A"/>
    <property type="chains" value="A=26-324"/>
</dbReference>
<dbReference type="PDB" id="6CAF">
    <property type="method" value="X-ray"/>
    <property type="resolution" value="1.30 A"/>
    <property type="chains" value="A=1-324"/>
</dbReference>
<dbReference type="PDB" id="6GWA">
    <property type="method" value="X-ray"/>
    <property type="resolution" value="2.10 A"/>
    <property type="chains" value="A=26-324"/>
</dbReference>
<dbReference type="PDBsum" id="1CNV"/>
<dbReference type="PDBsum" id="6CAF"/>
<dbReference type="PDBsum" id="6GWA"/>
<dbReference type="SMR" id="P49347"/>
<dbReference type="CAZy" id="GH18">
    <property type="family name" value="Glycoside Hydrolase Family 18"/>
</dbReference>
<dbReference type="EvolutionaryTrace" id="P49347"/>
<dbReference type="GO" id="GO:0005576">
    <property type="term" value="C:extracellular region"/>
    <property type="evidence" value="ECO:0007669"/>
    <property type="project" value="TreeGrafter"/>
</dbReference>
<dbReference type="GO" id="GO:0004568">
    <property type="term" value="F:chitinase activity"/>
    <property type="evidence" value="ECO:0007669"/>
    <property type="project" value="TreeGrafter"/>
</dbReference>
<dbReference type="GO" id="GO:0005975">
    <property type="term" value="P:carbohydrate metabolic process"/>
    <property type="evidence" value="ECO:0007669"/>
    <property type="project" value="InterPro"/>
</dbReference>
<dbReference type="CDD" id="cd02877">
    <property type="entry name" value="GH18_hevamine_XipI_class_III"/>
    <property type="match status" value="1"/>
</dbReference>
<dbReference type="Gene3D" id="3.20.20.80">
    <property type="entry name" value="Glycosidases"/>
    <property type="match status" value="1"/>
</dbReference>
<dbReference type="InterPro" id="IPR045321">
    <property type="entry name" value="Cts1-like"/>
</dbReference>
<dbReference type="InterPro" id="IPR001223">
    <property type="entry name" value="Glyco_hydro18_cat"/>
</dbReference>
<dbReference type="InterPro" id="IPR017853">
    <property type="entry name" value="Glycoside_hydrolase_SF"/>
</dbReference>
<dbReference type="InterPro" id="IPR050542">
    <property type="entry name" value="Glycosyl_Hydrlase18_Chitinase"/>
</dbReference>
<dbReference type="PANTHER" id="PTHR45708">
    <property type="entry name" value="ENDOCHITINASE"/>
    <property type="match status" value="1"/>
</dbReference>
<dbReference type="PANTHER" id="PTHR45708:SF31">
    <property type="entry name" value="III ACIDIC ENDOCHITINASE, PUTATIVE-RELATED"/>
    <property type="match status" value="1"/>
</dbReference>
<dbReference type="Pfam" id="PF00704">
    <property type="entry name" value="Glyco_hydro_18"/>
    <property type="match status" value="1"/>
</dbReference>
<dbReference type="SUPFAM" id="SSF51445">
    <property type="entry name" value="(Trans)glycosidases"/>
    <property type="match status" value="1"/>
</dbReference>
<dbReference type="PROSITE" id="PS51910">
    <property type="entry name" value="GH18_2"/>
    <property type="match status" value="1"/>
</dbReference>
<name>CONB_CANEN</name>
<proteinExistence type="evidence at protein level"/>
<keyword id="KW-0002">3D-structure</keyword>
<keyword id="KW-0903">Direct protein sequencing</keyword>
<keyword id="KW-0325">Glycoprotein</keyword>
<keyword id="KW-0732">Signal</keyword>